<sequence>MAFKPLHDRVLVRRVQSDEKTKGGLIIPDTAKEKPAEGEVVSCGEGARKDSGELIAMSVKAGDRVLFGKWSGTEVTIDGAELLIMKESDILGILS</sequence>
<reference key="1">
    <citation type="submission" date="2007-02" db="EMBL/GenBank/DDBJ databases">
        <title>Complete sequence of chromosome 1 of Rhodobacter sphaeroides ATCC 17029.</title>
        <authorList>
            <person name="Copeland A."/>
            <person name="Lucas S."/>
            <person name="Lapidus A."/>
            <person name="Barry K."/>
            <person name="Detter J.C."/>
            <person name="Glavina del Rio T."/>
            <person name="Hammon N."/>
            <person name="Israni S."/>
            <person name="Dalin E."/>
            <person name="Tice H."/>
            <person name="Pitluck S."/>
            <person name="Kiss H."/>
            <person name="Brettin T."/>
            <person name="Bruce D."/>
            <person name="Han C."/>
            <person name="Tapia R."/>
            <person name="Gilna P."/>
            <person name="Schmutz J."/>
            <person name="Larimer F."/>
            <person name="Land M."/>
            <person name="Hauser L."/>
            <person name="Kyrpides N."/>
            <person name="Mikhailova N."/>
            <person name="Richardson P."/>
            <person name="Mackenzie C."/>
            <person name="Choudhary M."/>
            <person name="Donohue T.J."/>
            <person name="Kaplan S."/>
        </authorList>
    </citation>
    <scope>NUCLEOTIDE SEQUENCE [LARGE SCALE GENOMIC DNA]</scope>
    <source>
        <strain>ATCC 17029 / ATH 2.4.9</strain>
    </source>
</reference>
<feature type="chain" id="PRO_1000025348" description="Co-chaperonin GroES">
    <location>
        <begin position="1"/>
        <end position="95"/>
    </location>
</feature>
<proteinExistence type="inferred from homology"/>
<name>CH10_CERS1</name>
<dbReference type="EMBL" id="CP000577">
    <property type="protein sequence ID" value="ABN76095.1"/>
    <property type="molecule type" value="Genomic_DNA"/>
</dbReference>
<dbReference type="RefSeq" id="WP_002719473.1">
    <property type="nucleotide sequence ID" value="NC_009049.1"/>
</dbReference>
<dbReference type="SMR" id="A3PIC9"/>
<dbReference type="KEGG" id="rsh:Rsph17029_0984"/>
<dbReference type="HOGENOM" id="CLU_132825_1_0_5"/>
<dbReference type="GO" id="GO:0005737">
    <property type="term" value="C:cytoplasm"/>
    <property type="evidence" value="ECO:0007669"/>
    <property type="project" value="UniProtKB-SubCell"/>
</dbReference>
<dbReference type="GO" id="GO:0005524">
    <property type="term" value="F:ATP binding"/>
    <property type="evidence" value="ECO:0007669"/>
    <property type="project" value="InterPro"/>
</dbReference>
<dbReference type="GO" id="GO:0046872">
    <property type="term" value="F:metal ion binding"/>
    <property type="evidence" value="ECO:0007669"/>
    <property type="project" value="TreeGrafter"/>
</dbReference>
<dbReference type="GO" id="GO:0044183">
    <property type="term" value="F:protein folding chaperone"/>
    <property type="evidence" value="ECO:0007669"/>
    <property type="project" value="InterPro"/>
</dbReference>
<dbReference type="GO" id="GO:0051087">
    <property type="term" value="F:protein-folding chaperone binding"/>
    <property type="evidence" value="ECO:0007669"/>
    <property type="project" value="TreeGrafter"/>
</dbReference>
<dbReference type="GO" id="GO:0051082">
    <property type="term" value="F:unfolded protein binding"/>
    <property type="evidence" value="ECO:0007669"/>
    <property type="project" value="TreeGrafter"/>
</dbReference>
<dbReference type="GO" id="GO:0051085">
    <property type="term" value="P:chaperone cofactor-dependent protein refolding"/>
    <property type="evidence" value="ECO:0007669"/>
    <property type="project" value="TreeGrafter"/>
</dbReference>
<dbReference type="CDD" id="cd00320">
    <property type="entry name" value="cpn10"/>
    <property type="match status" value="1"/>
</dbReference>
<dbReference type="FunFam" id="2.30.33.40:FF:000001">
    <property type="entry name" value="10 kDa chaperonin"/>
    <property type="match status" value="1"/>
</dbReference>
<dbReference type="Gene3D" id="2.30.33.40">
    <property type="entry name" value="GroES chaperonin"/>
    <property type="match status" value="1"/>
</dbReference>
<dbReference type="HAMAP" id="MF_00580">
    <property type="entry name" value="CH10"/>
    <property type="match status" value="1"/>
</dbReference>
<dbReference type="InterPro" id="IPR020818">
    <property type="entry name" value="Chaperonin_GroES"/>
</dbReference>
<dbReference type="InterPro" id="IPR037124">
    <property type="entry name" value="Chaperonin_GroES_sf"/>
</dbReference>
<dbReference type="InterPro" id="IPR018369">
    <property type="entry name" value="Chaprnonin_Cpn10_CS"/>
</dbReference>
<dbReference type="InterPro" id="IPR011032">
    <property type="entry name" value="GroES-like_sf"/>
</dbReference>
<dbReference type="NCBIfam" id="NF001527">
    <property type="entry name" value="PRK00364.1-2"/>
    <property type="match status" value="1"/>
</dbReference>
<dbReference type="NCBIfam" id="NF001529">
    <property type="entry name" value="PRK00364.1-5"/>
    <property type="match status" value="1"/>
</dbReference>
<dbReference type="NCBIfam" id="NF001531">
    <property type="entry name" value="PRK00364.2-2"/>
    <property type="match status" value="1"/>
</dbReference>
<dbReference type="NCBIfam" id="NF001533">
    <property type="entry name" value="PRK00364.2-4"/>
    <property type="match status" value="1"/>
</dbReference>
<dbReference type="PANTHER" id="PTHR10772">
    <property type="entry name" value="10 KDA HEAT SHOCK PROTEIN"/>
    <property type="match status" value="1"/>
</dbReference>
<dbReference type="PANTHER" id="PTHR10772:SF58">
    <property type="entry name" value="CO-CHAPERONIN GROES"/>
    <property type="match status" value="1"/>
</dbReference>
<dbReference type="Pfam" id="PF00166">
    <property type="entry name" value="Cpn10"/>
    <property type="match status" value="1"/>
</dbReference>
<dbReference type="PRINTS" id="PR00297">
    <property type="entry name" value="CHAPERONIN10"/>
</dbReference>
<dbReference type="SMART" id="SM00883">
    <property type="entry name" value="Cpn10"/>
    <property type="match status" value="1"/>
</dbReference>
<dbReference type="SUPFAM" id="SSF50129">
    <property type="entry name" value="GroES-like"/>
    <property type="match status" value="1"/>
</dbReference>
<dbReference type="PROSITE" id="PS00681">
    <property type="entry name" value="CHAPERONINS_CPN10"/>
    <property type="match status" value="1"/>
</dbReference>
<accession>A3PIC9</accession>
<gene>
    <name evidence="1" type="primary">groES</name>
    <name evidence="1" type="synonym">groS</name>
    <name type="ordered locus">Rsph17029_0984</name>
</gene>
<comment type="function">
    <text evidence="1">Together with the chaperonin GroEL, plays an essential role in assisting protein folding. The GroEL-GroES system forms a nano-cage that allows encapsulation of the non-native substrate proteins and provides a physical environment optimized to promote and accelerate protein folding. GroES binds to the apical surface of the GroEL ring, thereby capping the opening of the GroEL channel.</text>
</comment>
<comment type="subunit">
    <text evidence="1">Heptamer of 7 subunits arranged in a ring. Interacts with the chaperonin GroEL.</text>
</comment>
<comment type="subcellular location">
    <subcellularLocation>
        <location evidence="1">Cytoplasm</location>
    </subcellularLocation>
</comment>
<comment type="similarity">
    <text evidence="1">Belongs to the GroES chaperonin family.</text>
</comment>
<organism>
    <name type="scientific">Cereibacter sphaeroides (strain ATCC 17029 / ATH 2.4.9)</name>
    <name type="common">Rhodobacter sphaeroides</name>
    <dbReference type="NCBI Taxonomy" id="349101"/>
    <lineage>
        <taxon>Bacteria</taxon>
        <taxon>Pseudomonadati</taxon>
        <taxon>Pseudomonadota</taxon>
        <taxon>Alphaproteobacteria</taxon>
        <taxon>Rhodobacterales</taxon>
        <taxon>Paracoccaceae</taxon>
        <taxon>Cereibacter</taxon>
    </lineage>
</organism>
<protein>
    <recommendedName>
        <fullName evidence="1">Co-chaperonin GroES</fullName>
    </recommendedName>
    <alternativeName>
        <fullName evidence="1">10 kDa chaperonin</fullName>
    </alternativeName>
    <alternativeName>
        <fullName evidence="1">Chaperonin-10</fullName>
        <shortName evidence="1">Cpn10</shortName>
    </alternativeName>
</protein>
<keyword id="KW-0143">Chaperone</keyword>
<keyword id="KW-0963">Cytoplasm</keyword>
<evidence type="ECO:0000255" key="1">
    <source>
        <dbReference type="HAMAP-Rule" id="MF_00580"/>
    </source>
</evidence>